<proteinExistence type="inferred from homology"/>
<reference key="1">
    <citation type="journal article" date="2005" name="Nat. Biotechnol.">
        <title>Complete genome sequence of the plant commensal Pseudomonas fluorescens Pf-5.</title>
        <authorList>
            <person name="Paulsen I.T."/>
            <person name="Press C.M."/>
            <person name="Ravel J."/>
            <person name="Kobayashi D.Y."/>
            <person name="Myers G.S.A."/>
            <person name="Mavrodi D.V."/>
            <person name="DeBoy R.T."/>
            <person name="Seshadri R."/>
            <person name="Ren Q."/>
            <person name="Madupu R."/>
            <person name="Dodson R.J."/>
            <person name="Durkin A.S."/>
            <person name="Brinkac L.M."/>
            <person name="Daugherty S.C."/>
            <person name="Sullivan S.A."/>
            <person name="Rosovitz M.J."/>
            <person name="Gwinn M.L."/>
            <person name="Zhou L."/>
            <person name="Schneider D.J."/>
            <person name="Cartinhour S.W."/>
            <person name="Nelson W.C."/>
            <person name="Weidman J."/>
            <person name="Watkins K."/>
            <person name="Tran K."/>
            <person name="Khouri H."/>
            <person name="Pierson E.A."/>
            <person name="Pierson L.S. III"/>
            <person name="Thomashow L.S."/>
            <person name="Loper J.E."/>
        </authorList>
    </citation>
    <scope>NUCLEOTIDE SEQUENCE [LARGE SCALE GENOMIC DNA]</scope>
    <source>
        <strain>ATCC BAA-477 / NRRL B-23932 / Pf-5</strain>
    </source>
</reference>
<name>FABV_PSEF5</name>
<keyword id="KW-0275">Fatty acid biosynthesis</keyword>
<keyword id="KW-0276">Fatty acid metabolism</keyword>
<keyword id="KW-0444">Lipid biosynthesis</keyword>
<keyword id="KW-0443">Lipid metabolism</keyword>
<keyword id="KW-0520">NAD</keyword>
<keyword id="KW-0560">Oxidoreductase</keyword>
<evidence type="ECO:0000255" key="1">
    <source>
        <dbReference type="HAMAP-Rule" id="MF_01838"/>
    </source>
</evidence>
<protein>
    <recommendedName>
        <fullName evidence="1">Enoyl-[acyl-carrier-protein] reductase [NADH]</fullName>
        <shortName evidence="1">ENR</shortName>
        <ecNumber evidence="1">1.3.1.9</ecNumber>
    </recommendedName>
</protein>
<organism>
    <name type="scientific">Pseudomonas fluorescens (strain ATCC BAA-477 / NRRL B-23932 / Pf-5)</name>
    <dbReference type="NCBI Taxonomy" id="220664"/>
    <lineage>
        <taxon>Bacteria</taxon>
        <taxon>Pseudomonadati</taxon>
        <taxon>Pseudomonadota</taxon>
        <taxon>Gammaproteobacteria</taxon>
        <taxon>Pseudomonadales</taxon>
        <taxon>Pseudomonadaceae</taxon>
        <taxon>Pseudomonas</taxon>
    </lineage>
</organism>
<comment type="function">
    <text evidence="1">Involved in the final reduction of the elongation cycle of fatty acid synthesis (FAS II). Catalyzes the reduction of a carbon-carbon double bond in an enoyl moiety that is covalently linked to an acyl carrier protein (ACP).</text>
</comment>
<comment type="catalytic activity">
    <reaction evidence="1">
        <text>a 2,3-saturated acyl-[ACP] + NAD(+) = a (2E)-enoyl-[ACP] + NADH + H(+)</text>
        <dbReference type="Rhea" id="RHEA:10240"/>
        <dbReference type="Rhea" id="RHEA-COMP:9925"/>
        <dbReference type="Rhea" id="RHEA-COMP:9926"/>
        <dbReference type="ChEBI" id="CHEBI:15378"/>
        <dbReference type="ChEBI" id="CHEBI:57540"/>
        <dbReference type="ChEBI" id="CHEBI:57945"/>
        <dbReference type="ChEBI" id="CHEBI:78784"/>
        <dbReference type="ChEBI" id="CHEBI:78785"/>
        <dbReference type="EC" id="1.3.1.9"/>
    </reaction>
</comment>
<comment type="pathway">
    <text evidence="1">Lipid metabolism; fatty acid biosynthesis.</text>
</comment>
<comment type="subunit">
    <text evidence="1">Monomer.</text>
</comment>
<comment type="similarity">
    <text evidence="1">Belongs to the TER reductase family.</text>
</comment>
<gene>
    <name evidence="1" type="primary">fabV</name>
    <name type="ordered locus">PFL_3335</name>
</gene>
<sequence>MVIKPRVRGFICVTTHPVGCEANVKQQIDYVTQQGAIDAGPKNVLVLGASTGYGLAARITAAFGCGANTLGVFFERGSVDGKLGTAGWYNTAAFHKFAEEKGLYAKSINGDAFSDAVKAETIETIKRDLGKIDLVVYSLAAPRRTHPKTGEVLSSTLKPLGKSVTLRGVDTDKEIVKETTLQPATQEEIDGTVAVMGGEDWQMWIDALHEAGVLAEGAKTTAFTYLGEKLTHDIYWNGSIGEAKKDLDQKVIGMRQQLAGLGGDARVSVLKAVVTQASSAIPIMPLYLSLLFKVMKEQGSHEGCIEQVYGLYKDSLYNSEPVIDQEGRLRADYKELQPAVQDRVKQLWDQVTSENLYEMTDFVGYKQEFLRLFGFEIEGVDYEADVDPDVKISNLIQL</sequence>
<accession>Q4KBE3</accession>
<feature type="chain" id="PRO_1000070489" description="Enoyl-[acyl-carrier-protein] reductase [NADH]">
    <location>
        <begin position="1"/>
        <end position="398"/>
    </location>
</feature>
<feature type="active site" description="Proton donor" evidence="1">
    <location>
        <position position="235"/>
    </location>
</feature>
<feature type="binding site" evidence="1">
    <location>
        <begin position="48"/>
        <end position="53"/>
    </location>
    <ligand>
        <name>NAD(+)</name>
        <dbReference type="ChEBI" id="CHEBI:57540"/>
    </ligand>
</feature>
<feature type="binding site" evidence="1">
    <location>
        <begin position="74"/>
        <end position="75"/>
    </location>
    <ligand>
        <name>NAD(+)</name>
        <dbReference type="ChEBI" id="CHEBI:57540"/>
    </ligand>
</feature>
<feature type="binding site" evidence="1">
    <location>
        <begin position="111"/>
        <end position="112"/>
    </location>
    <ligand>
        <name>NAD(+)</name>
        <dbReference type="ChEBI" id="CHEBI:57540"/>
    </ligand>
</feature>
<feature type="binding site" evidence="1">
    <location>
        <begin position="139"/>
        <end position="140"/>
    </location>
    <ligand>
        <name>NAD(+)</name>
        <dbReference type="ChEBI" id="CHEBI:57540"/>
    </ligand>
</feature>
<feature type="binding site" evidence="1">
    <location>
        <position position="225"/>
    </location>
    <ligand>
        <name>substrate</name>
    </ligand>
</feature>
<feature type="binding site" evidence="1">
    <location>
        <position position="244"/>
    </location>
    <ligand>
        <name>NAD(+)</name>
        <dbReference type="ChEBI" id="CHEBI:57540"/>
    </ligand>
</feature>
<feature type="binding site" evidence="1">
    <location>
        <begin position="273"/>
        <end position="275"/>
    </location>
    <ligand>
        <name>NAD(+)</name>
        <dbReference type="ChEBI" id="CHEBI:57540"/>
    </ligand>
</feature>
<feature type="site" description="Plays an important role in discriminating NADH against NADPH" evidence="1">
    <location>
        <position position="75"/>
    </location>
</feature>
<dbReference type="EC" id="1.3.1.9" evidence="1"/>
<dbReference type="EMBL" id="CP000076">
    <property type="protein sequence ID" value="AAY92604.1"/>
    <property type="molecule type" value="Genomic_DNA"/>
</dbReference>
<dbReference type="RefSeq" id="WP_011061617.1">
    <property type="nucleotide sequence ID" value="NC_004129.6"/>
</dbReference>
<dbReference type="SMR" id="Q4KBE3"/>
<dbReference type="STRING" id="220664.PFL_3335"/>
<dbReference type="GeneID" id="57476352"/>
<dbReference type="KEGG" id="pfl:PFL_3335"/>
<dbReference type="PATRIC" id="fig|220664.5.peg.3402"/>
<dbReference type="eggNOG" id="COG3007">
    <property type="taxonomic scope" value="Bacteria"/>
</dbReference>
<dbReference type="HOGENOM" id="CLU_057698_1_0_6"/>
<dbReference type="UniPathway" id="UPA00094"/>
<dbReference type="Proteomes" id="UP000008540">
    <property type="component" value="Chromosome"/>
</dbReference>
<dbReference type="GO" id="GO:0004318">
    <property type="term" value="F:enoyl-[acyl-carrier-protein] reductase (NADH) activity"/>
    <property type="evidence" value="ECO:0007669"/>
    <property type="project" value="UniProtKB-UniRule"/>
</dbReference>
<dbReference type="GO" id="GO:0051287">
    <property type="term" value="F:NAD binding"/>
    <property type="evidence" value="ECO:0007669"/>
    <property type="project" value="UniProtKB-UniRule"/>
</dbReference>
<dbReference type="GO" id="GO:0050343">
    <property type="term" value="F:trans-2-enoyl-CoA reductase (NADH) activity"/>
    <property type="evidence" value="ECO:0007669"/>
    <property type="project" value="TreeGrafter"/>
</dbReference>
<dbReference type="GO" id="GO:0006633">
    <property type="term" value="P:fatty acid biosynthetic process"/>
    <property type="evidence" value="ECO:0007669"/>
    <property type="project" value="UniProtKB-UniRule"/>
</dbReference>
<dbReference type="FunFam" id="3.40.50.720:FF:000221">
    <property type="entry name" value="Enoyl-[acyl-carrier-protein] reductase [NADH]"/>
    <property type="match status" value="1"/>
</dbReference>
<dbReference type="Gene3D" id="3.40.50.720">
    <property type="entry name" value="NAD(P)-binding Rossmann-like Domain"/>
    <property type="match status" value="1"/>
</dbReference>
<dbReference type="HAMAP" id="MF_01838">
    <property type="entry name" value="FabV_reductase"/>
    <property type="match status" value="1"/>
</dbReference>
<dbReference type="InterPro" id="IPR024906">
    <property type="entry name" value="Eno_Rdtase_FAD-bd_dom"/>
</dbReference>
<dbReference type="InterPro" id="IPR024910">
    <property type="entry name" value="Enoyl-CoA_Rdtase_cat_dom"/>
</dbReference>
<dbReference type="InterPro" id="IPR050048">
    <property type="entry name" value="FabV-like_NADH_b"/>
</dbReference>
<dbReference type="InterPro" id="IPR010758">
    <property type="entry name" value="Trans-2-enoyl-CoA_reductase"/>
</dbReference>
<dbReference type="NCBIfam" id="NF043048">
    <property type="entry name" value="EnoyACPredFabV"/>
    <property type="match status" value="1"/>
</dbReference>
<dbReference type="NCBIfam" id="NF010177">
    <property type="entry name" value="PRK13656.1"/>
    <property type="match status" value="1"/>
</dbReference>
<dbReference type="PANTHER" id="PTHR37480">
    <property type="entry name" value="ENOYL-[ACYL-CARRIER-PROTEIN] REDUCTASE [NADH]"/>
    <property type="match status" value="1"/>
</dbReference>
<dbReference type="PANTHER" id="PTHR37480:SF1">
    <property type="entry name" value="ENOYL-[ACYL-CARRIER-PROTEIN] REDUCTASE [NADH]"/>
    <property type="match status" value="1"/>
</dbReference>
<dbReference type="Pfam" id="PF07055">
    <property type="entry name" value="Eno-Rase_FAD_bd"/>
    <property type="match status" value="1"/>
</dbReference>
<dbReference type="Pfam" id="PF12242">
    <property type="entry name" value="Eno-Rase_NADH_b"/>
    <property type="match status" value="1"/>
</dbReference>
<dbReference type="Pfam" id="PF12241">
    <property type="entry name" value="Enoyl_reductase"/>
    <property type="match status" value="1"/>
</dbReference>